<feature type="chain" id="PRO_0000210570" description="Uncharacterized protein MG369">
    <location>
        <begin position="1"/>
        <end position="557"/>
    </location>
</feature>
<feature type="domain" description="DhaL" evidence="1">
    <location>
        <begin position="7"/>
        <end position="206"/>
    </location>
</feature>
<feature type="sequence conflict" description="In Ref. 2; AAD10579." evidence="2" ref="2">
    <original>T</original>
    <variation>S</variation>
    <location>
        <position position="456"/>
    </location>
</feature>
<feature type="sequence conflict" description="In Ref. 2; AAD10579." evidence="2" ref="2">
    <original>N</original>
    <variation>I</variation>
    <location>
        <position position="481"/>
    </location>
</feature>
<accession>P47609</accession>
<accession>Q49215</accession>
<sequence length="557" mass="62665">MSSVNLSSFIDMLRLGCNNIAKNYEYINQLNVFPVPDGDTGTNMKVTITEAIKKLENEKSHIKSFSELGKNFTRDLLLFSRGNSGVIFSQIMKGFFSNIIVNKTSNNSELSIEDVANAFIVAQEVAYKNVSKPVEGTMLTVARLISNEFKSQKNRPKTLEKLFEQAVKVAWQAVKKTPQMLPVLKASGVVDSGAYGFACFLEGMLSYYGGESNLDDNTLSTIEIKFNKFKEQHANEDEFGYCTEYVLRLGLKINQTVEKQKFHQKKFESKVNRIANSVVIASDKDNGFVKVHAHTLKPHLLLEMGLNYGEFEFVKIDNMNLQVNNKNNSPTKRVLKPAIVATVPTEAFAERIREDHDINAILCTDDTGAPSVFSLLEAVKLTNSSNVIFLLHDKNYFLSANETIKQLKHQKINADYVITANPVESIAALTVFNSDLSIHTNVKAMKRFIKEFASATITQASKSYKENKVMVNKNDFIAVTNKSIIASESQLTDCFFKTIDILSKKVKKPEFLLAYYGKDITEQDAKKMQALVEKKYKLFCEFSPGEQKVFSYIIGIQ</sequence>
<name>Y369_MYCGE</name>
<reference key="1">
    <citation type="journal article" date="1995" name="Science">
        <title>The minimal gene complement of Mycoplasma genitalium.</title>
        <authorList>
            <person name="Fraser C.M."/>
            <person name="Gocayne J.D."/>
            <person name="White O."/>
            <person name="Adams M.D."/>
            <person name="Clayton R.A."/>
            <person name="Fleischmann R.D."/>
            <person name="Bult C.J."/>
            <person name="Kerlavage A.R."/>
            <person name="Sutton G.G."/>
            <person name="Kelley J.M."/>
            <person name="Fritchman J.L."/>
            <person name="Weidman J.F."/>
            <person name="Small K.V."/>
            <person name="Sandusky M."/>
            <person name="Fuhrmann J.L."/>
            <person name="Nguyen D.T."/>
            <person name="Utterback T.R."/>
            <person name="Saudek D.M."/>
            <person name="Phillips C.A."/>
            <person name="Merrick J.M."/>
            <person name="Tomb J.-F."/>
            <person name="Dougherty B.A."/>
            <person name="Bott K.F."/>
            <person name="Hu P.-C."/>
            <person name="Lucier T.S."/>
            <person name="Peterson S.N."/>
            <person name="Smith H.O."/>
            <person name="Hutchison C.A. III"/>
            <person name="Venter J.C."/>
        </authorList>
    </citation>
    <scope>NUCLEOTIDE SEQUENCE [LARGE SCALE GENOMIC DNA]</scope>
    <source>
        <strain>ATCC 33530 / DSM 19775 / NCTC 10195 / G37</strain>
    </source>
</reference>
<reference key="2">
    <citation type="journal article" date="1993" name="J. Bacteriol.">
        <title>A survey of the Mycoplasma genitalium genome by using random sequencing.</title>
        <authorList>
            <person name="Peterson S.N."/>
            <person name="Hu P.-C."/>
            <person name="Bott K.F."/>
            <person name="Hutchison C.A. III"/>
        </authorList>
    </citation>
    <scope>NUCLEOTIDE SEQUENCE [GENOMIC DNA] OF 383-481</scope>
    <source>
        <strain>ATCC 33530 / DSM 19775 / NCTC 10195 / G37</strain>
    </source>
</reference>
<keyword id="KW-1185">Reference proteome</keyword>
<proteinExistence type="predicted"/>
<dbReference type="EMBL" id="L43967">
    <property type="protein sequence ID" value="AAC71596.1"/>
    <property type="molecule type" value="Genomic_DNA"/>
</dbReference>
<dbReference type="EMBL" id="U01763">
    <property type="protein sequence ID" value="AAD10579.1"/>
    <property type="molecule type" value="Genomic_DNA"/>
</dbReference>
<dbReference type="PIR" id="H64240">
    <property type="entry name" value="H64240"/>
</dbReference>
<dbReference type="RefSeq" id="WP_010869453.1">
    <property type="nucleotide sequence ID" value="NC_000908.2"/>
</dbReference>
<dbReference type="SMR" id="P47609"/>
<dbReference type="FunCoup" id="P47609">
    <property type="interactions" value="4"/>
</dbReference>
<dbReference type="STRING" id="243273.MG_369"/>
<dbReference type="GeneID" id="88282552"/>
<dbReference type="KEGG" id="mge:MG_369"/>
<dbReference type="eggNOG" id="COG1461">
    <property type="taxonomic scope" value="Bacteria"/>
</dbReference>
<dbReference type="HOGENOM" id="CLU_017496_1_0_14"/>
<dbReference type="InParanoid" id="P47609"/>
<dbReference type="OrthoDB" id="9760324at2"/>
<dbReference type="BioCyc" id="MGEN243273:G1GJ2-463-MONOMER"/>
<dbReference type="Proteomes" id="UP000000807">
    <property type="component" value="Chromosome"/>
</dbReference>
<dbReference type="GO" id="GO:0004371">
    <property type="term" value="F:glycerone kinase activity"/>
    <property type="evidence" value="ECO:0007669"/>
    <property type="project" value="InterPro"/>
</dbReference>
<dbReference type="GO" id="GO:0006071">
    <property type="term" value="P:glycerol metabolic process"/>
    <property type="evidence" value="ECO:0007669"/>
    <property type="project" value="InterPro"/>
</dbReference>
<dbReference type="Gene3D" id="1.25.40.340">
    <property type="match status" value="1"/>
</dbReference>
<dbReference type="InterPro" id="IPR050270">
    <property type="entry name" value="DegV_domain_contain"/>
</dbReference>
<dbReference type="InterPro" id="IPR004007">
    <property type="entry name" value="DhaL_dom"/>
</dbReference>
<dbReference type="InterPro" id="IPR036117">
    <property type="entry name" value="DhaL_dom_sf"/>
</dbReference>
<dbReference type="InterPro" id="IPR033470">
    <property type="entry name" value="FakA-like_C"/>
</dbReference>
<dbReference type="InterPro" id="IPR048394">
    <property type="entry name" value="FakA-like_M"/>
</dbReference>
<dbReference type="InterPro" id="IPR019986">
    <property type="entry name" value="YloV-like"/>
</dbReference>
<dbReference type="NCBIfam" id="TIGR03599">
    <property type="entry name" value="YloV"/>
    <property type="match status" value="1"/>
</dbReference>
<dbReference type="PANTHER" id="PTHR33434">
    <property type="entry name" value="DEGV DOMAIN-CONTAINING PROTEIN DR_1986-RELATED"/>
    <property type="match status" value="1"/>
</dbReference>
<dbReference type="PANTHER" id="PTHR33434:SF4">
    <property type="entry name" value="PHOSPHATASE PROTEIN"/>
    <property type="match status" value="1"/>
</dbReference>
<dbReference type="Pfam" id="PF02734">
    <property type="entry name" value="Dak2"/>
    <property type="match status" value="1"/>
</dbReference>
<dbReference type="Pfam" id="PF13684">
    <property type="entry name" value="FakA-like_C"/>
    <property type="match status" value="1"/>
</dbReference>
<dbReference type="Pfam" id="PF21645">
    <property type="entry name" value="FakA-like_M"/>
    <property type="match status" value="1"/>
</dbReference>
<dbReference type="SMART" id="SM01121">
    <property type="entry name" value="Dak1_2"/>
    <property type="match status" value="1"/>
</dbReference>
<dbReference type="SMART" id="SM01120">
    <property type="entry name" value="Dak2"/>
    <property type="match status" value="1"/>
</dbReference>
<dbReference type="SUPFAM" id="SSF101473">
    <property type="entry name" value="DhaL-like"/>
    <property type="match status" value="1"/>
</dbReference>
<dbReference type="PROSITE" id="PS51480">
    <property type="entry name" value="DHAL"/>
    <property type="match status" value="1"/>
</dbReference>
<protein>
    <recommendedName>
        <fullName>Uncharacterized protein MG369</fullName>
    </recommendedName>
</protein>
<organism>
    <name type="scientific">Mycoplasma genitalium (strain ATCC 33530 / DSM 19775 / NCTC 10195 / G37)</name>
    <name type="common">Mycoplasmoides genitalium</name>
    <dbReference type="NCBI Taxonomy" id="243273"/>
    <lineage>
        <taxon>Bacteria</taxon>
        <taxon>Bacillati</taxon>
        <taxon>Mycoplasmatota</taxon>
        <taxon>Mycoplasmoidales</taxon>
        <taxon>Mycoplasmoidaceae</taxon>
        <taxon>Mycoplasmoides</taxon>
    </lineage>
</organism>
<gene>
    <name type="ordered locus">MG369</name>
</gene>
<evidence type="ECO:0000255" key="1">
    <source>
        <dbReference type="PROSITE-ProRule" id="PRU00813"/>
    </source>
</evidence>
<evidence type="ECO:0000305" key="2"/>